<sequence>MVPALRYLVGACGRARGLFAGGSPGACGFASGRPRPLCGGSRSASTSSFDIVIVGGGIVGLASARALILRHPSLSIGVLEKEKDLAVHQTGHNSGVIHSGIYYKPESLKAKLCVQGAALLYEYCQQKGISYKQCGKLIVAVEQEEIPRLQALYEKGLQNGVPGLRLIQQEDIKKKEPYCRGLMAIDCPHTGIVDYRQVALSFAQDFQEAGGSVLTNFEVKGIEMAKESPSRSIDGMQYPIVIKNTKGEEIRCQYVVTCAGLYSDRISELSGCTPDPRIVPFRGDYLLLKPEKCYLVKGNIYPVPDSRFPFLGVHFTPRMDGSIWLGPNAVLAFKREGYRPFDFSATDVMDIIINSGLIKLASQNFSYGVTEMYKACFLGATVKYLQKFIPEITISDILRGPAGVRAQALDRDGNLVEDFVFDAGVGDIGNRILHVRNAPSPAATSSIAISGMIADEVQQRFEL</sequence>
<dbReference type="EC" id="1.1.99.2"/>
<dbReference type="EMBL" id="AY757363">
    <property type="protein sequence ID" value="AAV52330.1"/>
    <property type="molecule type" value="mRNA"/>
</dbReference>
<dbReference type="EMBL" id="AK022680">
    <property type="protein sequence ID" value="BAB14174.1"/>
    <property type="molecule type" value="mRNA"/>
</dbReference>
<dbReference type="EMBL" id="AL109758">
    <property type="status" value="NOT_ANNOTATED_CDS"/>
    <property type="molecule type" value="Genomic_DNA"/>
</dbReference>
<dbReference type="EMBL" id="AL359397">
    <property type="status" value="NOT_ANNOTATED_CDS"/>
    <property type="molecule type" value="Genomic_DNA"/>
</dbReference>
<dbReference type="EMBL" id="BC006117">
    <property type="protein sequence ID" value="AAH06117.1"/>
    <property type="molecule type" value="mRNA"/>
</dbReference>
<dbReference type="CCDS" id="CCDS9698.1">
    <molecule id="Q9H9P8-1"/>
</dbReference>
<dbReference type="RefSeq" id="NP_001412141.1">
    <molecule id="Q9H9P8-1"/>
    <property type="nucleotide sequence ID" value="NM_001425212.1"/>
</dbReference>
<dbReference type="RefSeq" id="NP_079160.1">
    <molecule id="Q9H9P8-1"/>
    <property type="nucleotide sequence ID" value="NM_024884.3"/>
</dbReference>
<dbReference type="RefSeq" id="XP_005268132.1">
    <property type="nucleotide sequence ID" value="XM_005268075.4"/>
</dbReference>
<dbReference type="SMR" id="Q9H9P8"/>
<dbReference type="BioGRID" id="123016">
    <property type="interactions" value="85"/>
</dbReference>
<dbReference type="FunCoup" id="Q9H9P8">
    <property type="interactions" value="1356"/>
</dbReference>
<dbReference type="IntAct" id="Q9H9P8">
    <property type="interactions" value="40"/>
</dbReference>
<dbReference type="STRING" id="9606.ENSP00000267436"/>
<dbReference type="GlyGen" id="Q9H9P8">
    <property type="glycosylation" value="1 site, 1 O-linked glycan (1 site)"/>
</dbReference>
<dbReference type="iPTMnet" id="Q9H9P8"/>
<dbReference type="PhosphoSitePlus" id="Q9H9P8"/>
<dbReference type="SwissPalm" id="Q9H9P8"/>
<dbReference type="BioMuta" id="L2HGDH"/>
<dbReference type="DMDM" id="317373422"/>
<dbReference type="jPOST" id="Q9H9P8"/>
<dbReference type="MassIVE" id="Q9H9P8"/>
<dbReference type="PaxDb" id="9606-ENSP00000267436"/>
<dbReference type="PeptideAtlas" id="Q9H9P8"/>
<dbReference type="ProteomicsDB" id="81345">
    <molecule id="Q9H9P8-1"/>
</dbReference>
<dbReference type="ProteomicsDB" id="81346">
    <molecule id="Q9H9P8-2"/>
</dbReference>
<dbReference type="Pumba" id="Q9H9P8"/>
<dbReference type="Antibodypedia" id="47264">
    <property type="antibodies" value="181 antibodies from 26 providers"/>
</dbReference>
<dbReference type="DNASU" id="79944"/>
<dbReference type="Ensembl" id="ENST00000267436.9">
    <molecule id="Q9H9P8-1"/>
    <property type="protein sequence ID" value="ENSP00000267436.4"/>
    <property type="gene ID" value="ENSG00000087299.12"/>
</dbReference>
<dbReference type="Ensembl" id="ENST00000421284.7">
    <molecule id="Q9H9P8-1"/>
    <property type="protein sequence ID" value="ENSP00000405559.3"/>
    <property type="gene ID" value="ENSG00000087299.12"/>
</dbReference>
<dbReference type="GeneID" id="79944"/>
<dbReference type="KEGG" id="hsa:79944"/>
<dbReference type="MANE-Select" id="ENST00000267436.9">
    <property type="protein sequence ID" value="ENSP00000267436.4"/>
    <property type="RefSeq nucleotide sequence ID" value="NM_024884.3"/>
    <property type="RefSeq protein sequence ID" value="NP_079160.1"/>
</dbReference>
<dbReference type="UCSC" id="uc001wxu.4">
    <molecule id="Q9H9P8-1"/>
    <property type="organism name" value="human"/>
</dbReference>
<dbReference type="AGR" id="HGNC:20499"/>
<dbReference type="CTD" id="79944"/>
<dbReference type="DisGeNET" id="79944"/>
<dbReference type="GeneCards" id="L2HGDH"/>
<dbReference type="HGNC" id="HGNC:20499">
    <property type="gene designation" value="L2HGDH"/>
</dbReference>
<dbReference type="HPA" id="ENSG00000087299">
    <property type="expression patterns" value="Low tissue specificity"/>
</dbReference>
<dbReference type="MalaCards" id="L2HGDH"/>
<dbReference type="MIM" id="236792">
    <property type="type" value="phenotype"/>
</dbReference>
<dbReference type="MIM" id="609584">
    <property type="type" value="gene"/>
</dbReference>
<dbReference type="neXtProt" id="NX_Q9H9P8"/>
<dbReference type="OpenTargets" id="ENSG00000087299"/>
<dbReference type="Orphanet" id="79314">
    <property type="disease" value="L-2-hydroxyglutaric aciduria"/>
</dbReference>
<dbReference type="PharmGKB" id="PA134971279"/>
<dbReference type="VEuPathDB" id="HostDB:ENSG00000087299"/>
<dbReference type="eggNOG" id="KOG2665">
    <property type="taxonomic scope" value="Eukaryota"/>
</dbReference>
<dbReference type="GeneTree" id="ENSGT00490000043421"/>
<dbReference type="HOGENOM" id="CLU_024775_0_0_1"/>
<dbReference type="InParanoid" id="Q9H9P8"/>
<dbReference type="OMA" id="GVHFTRM"/>
<dbReference type="OrthoDB" id="498204at2759"/>
<dbReference type="PAN-GO" id="Q9H9P8">
    <property type="GO annotations" value="3 GO annotations based on evolutionary models"/>
</dbReference>
<dbReference type="PhylomeDB" id="Q9H9P8"/>
<dbReference type="TreeFam" id="TF105922"/>
<dbReference type="BRENDA" id="1.1.99.2">
    <property type="organism ID" value="2681"/>
</dbReference>
<dbReference type="PathwayCommons" id="Q9H9P8"/>
<dbReference type="Reactome" id="R-HSA-880009">
    <property type="pathway name" value="Interconversion of 2-oxoglutarate and 2-hydroxyglutarate"/>
</dbReference>
<dbReference type="SABIO-RK" id="Q9H9P8"/>
<dbReference type="SignaLink" id="Q9H9P8"/>
<dbReference type="BioGRID-ORCS" id="79944">
    <property type="hits" value="14 hits in 1160 CRISPR screens"/>
</dbReference>
<dbReference type="ChiTaRS" id="L2HGDH">
    <property type="organism name" value="human"/>
</dbReference>
<dbReference type="GeneWiki" id="L2HGDH"/>
<dbReference type="GenomeRNAi" id="79944"/>
<dbReference type="Pharos" id="Q9H9P8">
    <property type="development level" value="Tbio"/>
</dbReference>
<dbReference type="PRO" id="PR:Q9H9P8"/>
<dbReference type="Proteomes" id="UP000005640">
    <property type="component" value="Chromosome 14"/>
</dbReference>
<dbReference type="RNAct" id="Q9H9P8">
    <property type="molecule type" value="protein"/>
</dbReference>
<dbReference type="Bgee" id="ENSG00000087299">
    <property type="expression patterns" value="Expressed in primordial germ cell in gonad and 139 other cell types or tissues"/>
</dbReference>
<dbReference type="ExpressionAtlas" id="Q9H9P8">
    <property type="expression patterns" value="baseline and differential"/>
</dbReference>
<dbReference type="GO" id="GO:0016020">
    <property type="term" value="C:membrane"/>
    <property type="evidence" value="ECO:0000314"/>
    <property type="project" value="HGNC-UCL"/>
</dbReference>
<dbReference type="GO" id="GO:0005743">
    <property type="term" value="C:mitochondrial inner membrane"/>
    <property type="evidence" value="ECO:0000304"/>
    <property type="project" value="Reactome"/>
</dbReference>
<dbReference type="GO" id="GO:0005739">
    <property type="term" value="C:mitochondrion"/>
    <property type="evidence" value="ECO:0000314"/>
    <property type="project" value="HGNC-UCL"/>
</dbReference>
<dbReference type="GO" id="GO:0047545">
    <property type="term" value="F:2-hydroxyglutarate dehydrogenase activity"/>
    <property type="evidence" value="ECO:0000314"/>
    <property type="project" value="HGNC-UCL"/>
</dbReference>
<dbReference type="GO" id="GO:0006103">
    <property type="term" value="P:2-oxoglutarate metabolic process"/>
    <property type="evidence" value="ECO:0000304"/>
    <property type="project" value="Reactome"/>
</dbReference>
<dbReference type="GO" id="GO:0044281">
    <property type="term" value="P:small molecule metabolic process"/>
    <property type="evidence" value="ECO:0000314"/>
    <property type="project" value="HGNC-UCL"/>
</dbReference>
<dbReference type="Gene3D" id="3.30.9.10">
    <property type="entry name" value="D-Amino Acid Oxidase, subunit A, domain 2"/>
    <property type="match status" value="1"/>
</dbReference>
<dbReference type="Gene3D" id="3.50.50.60">
    <property type="entry name" value="FAD/NAD(P)-binding domain"/>
    <property type="match status" value="1"/>
</dbReference>
<dbReference type="InterPro" id="IPR006076">
    <property type="entry name" value="FAD-dep_OxRdtase"/>
</dbReference>
<dbReference type="InterPro" id="IPR036188">
    <property type="entry name" value="FAD/NAD-bd_sf"/>
</dbReference>
<dbReference type="NCBIfam" id="NF008726">
    <property type="entry name" value="PRK11728.1"/>
    <property type="match status" value="1"/>
</dbReference>
<dbReference type="PANTHER" id="PTHR43104">
    <property type="entry name" value="L-2-HYDROXYGLUTARATE DEHYDROGENASE, MITOCHONDRIAL"/>
    <property type="match status" value="1"/>
</dbReference>
<dbReference type="PANTHER" id="PTHR43104:SF2">
    <property type="entry name" value="L-2-HYDROXYGLUTARATE DEHYDROGENASE, MITOCHONDRIAL"/>
    <property type="match status" value="1"/>
</dbReference>
<dbReference type="Pfam" id="PF01266">
    <property type="entry name" value="DAO"/>
    <property type="match status" value="1"/>
</dbReference>
<dbReference type="SUPFAM" id="SSF51905">
    <property type="entry name" value="FAD/NAD(P)-binding domain"/>
    <property type="match status" value="1"/>
</dbReference>
<proteinExistence type="evidence at protein level"/>
<organism>
    <name type="scientific">Homo sapiens</name>
    <name type="common">Human</name>
    <dbReference type="NCBI Taxonomy" id="9606"/>
    <lineage>
        <taxon>Eukaryota</taxon>
        <taxon>Metazoa</taxon>
        <taxon>Chordata</taxon>
        <taxon>Craniata</taxon>
        <taxon>Vertebrata</taxon>
        <taxon>Euteleostomi</taxon>
        <taxon>Mammalia</taxon>
        <taxon>Eutheria</taxon>
        <taxon>Euarchontoglires</taxon>
        <taxon>Primates</taxon>
        <taxon>Haplorrhini</taxon>
        <taxon>Catarrhini</taxon>
        <taxon>Hominidae</taxon>
        <taxon>Homo</taxon>
    </lineage>
</organism>
<name>L2HDH_HUMAN</name>
<gene>
    <name type="primary">L2HGDH</name>
    <name type="synonym">C14orf160</name>
</gene>
<protein>
    <recommendedName>
        <fullName>L-2-hydroxyglutarate dehydrogenase, mitochondrial</fullName>
        <ecNumber>1.1.99.2</ecNumber>
    </recommendedName>
    <alternativeName>
        <fullName>Duranin</fullName>
    </alternativeName>
</protein>
<keyword id="KW-0007">Acetylation</keyword>
<keyword id="KW-0025">Alternative splicing</keyword>
<keyword id="KW-0225">Disease variant</keyword>
<keyword id="KW-0274">FAD</keyword>
<keyword id="KW-0285">Flavoprotein</keyword>
<keyword id="KW-0496">Mitochondrion</keyword>
<keyword id="KW-0560">Oxidoreductase</keyword>
<keyword id="KW-1267">Proteomics identification</keyword>
<keyword id="KW-1185">Reference proteome</keyword>
<keyword id="KW-0809">Transit peptide</keyword>
<accession>Q9H9P8</accession>
<accession>Q9BRR1</accession>
<feature type="transit peptide" description="Mitochondrion" evidence="2">
    <location>
        <begin position="1"/>
        <end position="51"/>
    </location>
</feature>
<feature type="chain" id="PRO_0000228129" description="L-2-hydroxyglutarate dehydrogenase, mitochondrial">
    <location>
        <begin position="52"/>
        <end position="463"/>
    </location>
</feature>
<feature type="modified residue" description="N6-acetyllysine" evidence="1">
    <location>
        <position position="104"/>
    </location>
</feature>
<feature type="modified residue" description="N6-acetyllysine" evidence="10">
    <location>
        <position position="155"/>
    </location>
</feature>
<feature type="modified residue" description="N6-acetyllysine" evidence="1">
    <location>
        <position position="173"/>
    </location>
</feature>
<feature type="splice variant" id="VSP_017662" description="In isoform 2." evidence="8">
    <original>G</original>
    <variation>QVAVRGPSWLWQQPMKVSDNNIYCFLWRCFALLLTGSTCSFK</variation>
    <location>
        <position position="400"/>
    </location>
</feature>
<feature type="splice variant" id="VSP_017663" description="In isoform 2." evidence="8">
    <location>
        <begin position="401"/>
        <end position="463"/>
    </location>
</feature>
<feature type="sequence variant" id="VAR_025681" description="In dbSNP:rs2275591." evidence="4 7">
    <original>L</original>
    <variation>R</variation>
    <location>
        <position position="18"/>
    </location>
</feature>
<feature type="sequence variant" id="VAR_057808" description="In dbSNP:rs35710558.">
    <original>R</original>
    <variation>S</variation>
    <location>
        <position position="33"/>
    </location>
</feature>
<feature type="sequence variant" id="VAR_025682" description="In L2HGA; dbSNP:rs118204021." evidence="3">
    <original>G</original>
    <variation>D</variation>
    <location>
        <position position="55"/>
    </location>
</feature>
<feature type="sequence variant" id="VAR_025683" description="In L2HGA; dbSNP:rs199690954." evidence="7">
    <original>G</original>
    <variation>R</variation>
    <location>
        <position position="57"/>
    </location>
</feature>
<feature type="sequence variant" id="VAR_025684" description="In L2HGA; alters protein processing and abolishes catalytic activity; dbSNP:rs970541687." evidence="5">
    <original>K</original>
    <variation>E</variation>
    <location>
        <position position="81"/>
    </location>
</feature>
<feature type="sequence variant" id="VAR_025685" description="In L2HGA; dbSNP:rs267607206." evidence="7">
    <original>H</original>
    <variation>R</variation>
    <location>
        <position position="98"/>
    </location>
</feature>
<feature type="sequence variant" id="VAR_025686" description="In L2HGA." evidence="3">
    <original>H</original>
    <variation>Y</variation>
    <location>
        <position position="98"/>
    </location>
</feature>
<feature type="sequence variant" id="VAR_025687" description="In L2HGA; alters protein processing and abolishes catalytic activity." evidence="5">
    <original>E</original>
    <variation>D</variation>
    <location>
        <position position="176"/>
    </location>
</feature>
<feature type="sequence variant" id="VAR_025688" description="In dbSNP:rs770542189." evidence="7">
    <original>Y</original>
    <variation>F</variation>
    <location>
        <position position="178"/>
    </location>
</feature>
<feature type="sequence variant" id="VAR_025689" description="In L2HGA; dbSNP:rs118204020." evidence="3 7">
    <original>P</original>
    <variation>L</variation>
    <location>
        <position position="302"/>
    </location>
</feature>
<feature type="sequence variant" id="VAR_025690" description="In L2HGA; dbSNP:rs750044734." evidence="7">
    <original>H</original>
    <variation>P</variation>
    <location>
        <position position="434"/>
    </location>
</feature>
<comment type="catalytic activity">
    <reaction evidence="6">
        <text>(S)-2-hydroxyglutarate + A = 2-oxoglutarate + AH2</text>
        <dbReference type="Rhea" id="RHEA:21252"/>
        <dbReference type="ChEBI" id="CHEBI:13193"/>
        <dbReference type="ChEBI" id="CHEBI:16782"/>
        <dbReference type="ChEBI" id="CHEBI:16810"/>
        <dbReference type="ChEBI" id="CHEBI:17499"/>
        <dbReference type="EC" id="1.1.99.2"/>
    </reaction>
</comment>
<comment type="cofactor">
    <cofactor evidence="6">
        <name>FAD</name>
        <dbReference type="ChEBI" id="CHEBI:57692"/>
    </cofactor>
</comment>
<comment type="biophysicochemical properties">
    <kinetics>
        <KM evidence="6">800 uM for L-2-hydroxyglutarate</KM>
    </kinetics>
</comment>
<comment type="subcellular location">
    <subcellularLocation>
        <location evidence="6">Mitochondrion</location>
    </subcellularLocation>
</comment>
<comment type="alternative products">
    <event type="alternative splicing"/>
    <isoform>
        <id>Q9H9P8-1</id>
        <name>1</name>
        <sequence type="displayed"/>
    </isoform>
    <isoform>
        <id>Q9H9P8-2</id>
        <name>2</name>
        <sequence type="described" ref="VSP_017662 VSP_017663"/>
    </isoform>
</comment>
<comment type="tissue specificity">
    <text evidence="3">Widely expressed. Highly expressed in brain, testis and muscle. Expressed to a lower extent in lymphocytes, fibroblasts, keratinocytes, placenta, bladder, small intestine, liver and bone marrow.</text>
</comment>
<comment type="disease" evidence="3 5 7">
    <disease id="DI-00626">
        <name>L-2-hydroxyglutaric aciduria</name>
        <acronym>L2HGA</acronym>
        <description>A rare autosomal recessive disorder clinically characterized by mild psychomotor delay in the first years of life, followed by progressive cerebellar ataxia, dysarthria and moderate to severe intellectual disability. Diagnosis is based on the presence of an excess of L-2-hydroxyglutaric acid in urine, blood and cerebrospinal fluid.</description>
        <dbReference type="MIM" id="236792"/>
    </disease>
    <text>The disease is caused by variants affecting the gene represented in this entry.</text>
</comment>
<comment type="miscellaneous">
    <text>Was named 'duranin' in honor of Marinus Duran, who first described L-2-hydroxyglutaric aciduria.</text>
</comment>
<comment type="similarity">
    <text evidence="9">Belongs to the L2HGDH family.</text>
</comment>
<evidence type="ECO:0000250" key="1">
    <source>
        <dbReference type="UniProtKB" id="Q91YP0"/>
    </source>
</evidence>
<evidence type="ECO:0000255" key="2"/>
<evidence type="ECO:0000269" key="3">
    <source>
    </source>
</evidence>
<evidence type="ECO:0000269" key="4">
    <source>
    </source>
</evidence>
<evidence type="ECO:0000269" key="5">
    <source>
    </source>
</evidence>
<evidence type="ECO:0000269" key="6">
    <source>
    </source>
</evidence>
<evidence type="ECO:0000269" key="7">
    <source>
    </source>
</evidence>
<evidence type="ECO:0000303" key="8">
    <source>
    </source>
</evidence>
<evidence type="ECO:0000305" key="9"/>
<evidence type="ECO:0007744" key="10">
    <source>
    </source>
</evidence>
<reference key="1">
    <citation type="journal article" date="2004" name="Proc. Natl. Acad. Sci. U.S.A.">
        <title>A gene encoding a putative FAD-dependent L-2-hydroxyglutarate dehydrogenase is mutated in L-2-hydroxyglutaric aciduria.</title>
        <authorList>
            <person name="Rzem R."/>
            <person name="Veiga-da-Cunha M."/>
            <person name="Noel G."/>
            <person name="Goffette S."/>
            <person name="Nassogne M.-C."/>
            <person name="Tabarki B."/>
            <person name="Schoeller C."/>
            <person name="Marquardt T."/>
            <person name="Vikkula M."/>
            <person name="van Schaftingen E."/>
        </authorList>
    </citation>
    <scope>NUCLEOTIDE SEQUENCE [MRNA] (ISOFORM 1)</scope>
    <scope>VARIANTS L2HGA GLU-81 AND ASP-176</scope>
    <scope>CHARACTERIZATION OF VARIANTS L2HGA GLU-81 AND ASP-176</scope>
</reference>
<reference key="2">
    <citation type="journal article" date="2004" name="Nat. Genet.">
        <title>Complete sequencing and characterization of 21,243 full-length human cDNAs.</title>
        <authorList>
            <person name="Ota T."/>
            <person name="Suzuki Y."/>
            <person name="Nishikawa T."/>
            <person name="Otsuki T."/>
            <person name="Sugiyama T."/>
            <person name="Irie R."/>
            <person name="Wakamatsu A."/>
            <person name="Hayashi K."/>
            <person name="Sato H."/>
            <person name="Nagai K."/>
            <person name="Kimura K."/>
            <person name="Makita H."/>
            <person name="Sekine M."/>
            <person name="Obayashi M."/>
            <person name="Nishi T."/>
            <person name="Shibahara T."/>
            <person name="Tanaka T."/>
            <person name="Ishii S."/>
            <person name="Yamamoto J."/>
            <person name="Saito K."/>
            <person name="Kawai Y."/>
            <person name="Isono Y."/>
            <person name="Nakamura Y."/>
            <person name="Nagahari K."/>
            <person name="Murakami K."/>
            <person name="Yasuda T."/>
            <person name="Iwayanagi T."/>
            <person name="Wagatsuma M."/>
            <person name="Shiratori A."/>
            <person name="Sudo H."/>
            <person name="Hosoiri T."/>
            <person name="Kaku Y."/>
            <person name="Kodaira H."/>
            <person name="Kondo H."/>
            <person name="Sugawara M."/>
            <person name="Takahashi M."/>
            <person name="Kanda K."/>
            <person name="Yokoi T."/>
            <person name="Furuya T."/>
            <person name="Kikkawa E."/>
            <person name="Omura Y."/>
            <person name="Abe K."/>
            <person name="Kamihara K."/>
            <person name="Katsuta N."/>
            <person name="Sato K."/>
            <person name="Tanikawa M."/>
            <person name="Yamazaki M."/>
            <person name="Ninomiya K."/>
            <person name="Ishibashi T."/>
            <person name="Yamashita H."/>
            <person name="Murakawa K."/>
            <person name="Fujimori K."/>
            <person name="Tanai H."/>
            <person name="Kimata M."/>
            <person name="Watanabe M."/>
            <person name="Hiraoka S."/>
            <person name="Chiba Y."/>
            <person name="Ishida S."/>
            <person name="Ono Y."/>
            <person name="Takiguchi S."/>
            <person name="Watanabe S."/>
            <person name="Yosida M."/>
            <person name="Hotuta T."/>
            <person name="Kusano J."/>
            <person name="Kanehori K."/>
            <person name="Takahashi-Fujii A."/>
            <person name="Hara H."/>
            <person name="Tanase T.-O."/>
            <person name="Nomura Y."/>
            <person name="Togiya S."/>
            <person name="Komai F."/>
            <person name="Hara R."/>
            <person name="Takeuchi K."/>
            <person name="Arita M."/>
            <person name="Imose N."/>
            <person name="Musashino K."/>
            <person name="Yuuki H."/>
            <person name="Oshima A."/>
            <person name="Sasaki N."/>
            <person name="Aotsuka S."/>
            <person name="Yoshikawa Y."/>
            <person name="Matsunawa H."/>
            <person name="Ichihara T."/>
            <person name="Shiohata N."/>
            <person name="Sano S."/>
            <person name="Moriya S."/>
            <person name="Momiyama H."/>
            <person name="Satoh N."/>
            <person name="Takami S."/>
            <person name="Terashima Y."/>
            <person name="Suzuki O."/>
            <person name="Nakagawa S."/>
            <person name="Senoh A."/>
            <person name="Mizoguchi H."/>
            <person name="Goto Y."/>
            <person name="Shimizu F."/>
            <person name="Wakebe H."/>
            <person name="Hishigaki H."/>
            <person name="Watanabe T."/>
            <person name="Sugiyama A."/>
            <person name="Takemoto M."/>
            <person name="Kawakami B."/>
            <person name="Yamazaki M."/>
            <person name="Watanabe K."/>
            <person name="Kumagai A."/>
            <person name="Itakura S."/>
            <person name="Fukuzumi Y."/>
            <person name="Fujimori Y."/>
            <person name="Komiyama M."/>
            <person name="Tashiro H."/>
            <person name="Tanigami A."/>
            <person name="Fujiwara T."/>
            <person name="Ono T."/>
            <person name="Yamada K."/>
            <person name="Fujii Y."/>
            <person name="Ozaki K."/>
            <person name="Hirao M."/>
            <person name="Ohmori Y."/>
            <person name="Kawabata A."/>
            <person name="Hikiji T."/>
            <person name="Kobatake N."/>
            <person name="Inagaki H."/>
            <person name="Ikema Y."/>
            <person name="Okamoto S."/>
            <person name="Okitani R."/>
            <person name="Kawakami T."/>
            <person name="Noguchi S."/>
            <person name="Itoh T."/>
            <person name="Shigeta K."/>
            <person name="Senba T."/>
            <person name="Matsumura K."/>
            <person name="Nakajima Y."/>
            <person name="Mizuno T."/>
            <person name="Morinaga M."/>
            <person name="Sasaki M."/>
            <person name="Togashi T."/>
            <person name="Oyama M."/>
            <person name="Hata H."/>
            <person name="Watanabe M."/>
            <person name="Komatsu T."/>
            <person name="Mizushima-Sugano J."/>
            <person name="Satoh T."/>
            <person name="Shirai Y."/>
            <person name="Takahashi Y."/>
            <person name="Nakagawa K."/>
            <person name="Okumura K."/>
            <person name="Nagase T."/>
            <person name="Nomura N."/>
            <person name="Kikuchi H."/>
            <person name="Masuho Y."/>
            <person name="Yamashita R."/>
            <person name="Nakai K."/>
            <person name="Yada T."/>
            <person name="Nakamura Y."/>
            <person name="Ohara O."/>
            <person name="Isogai T."/>
            <person name="Sugano S."/>
        </authorList>
    </citation>
    <scope>NUCLEOTIDE SEQUENCE [LARGE SCALE MRNA] (ISOFORM 1)</scope>
</reference>
<reference key="3">
    <citation type="journal article" date="2003" name="Nature">
        <title>The DNA sequence and analysis of human chromosome 14.</title>
        <authorList>
            <person name="Heilig R."/>
            <person name="Eckenberg R."/>
            <person name="Petit J.-L."/>
            <person name="Fonknechten N."/>
            <person name="Da Silva C."/>
            <person name="Cattolico L."/>
            <person name="Levy M."/>
            <person name="Barbe V."/>
            <person name="De Berardinis V."/>
            <person name="Ureta-Vidal A."/>
            <person name="Pelletier E."/>
            <person name="Vico V."/>
            <person name="Anthouard V."/>
            <person name="Rowen L."/>
            <person name="Madan A."/>
            <person name="Qin S."/>
            <person name="Sun H."/>
            <person name="Du H."/>
            <person name="Pepin K."/>
            <person name="Artiguenave F."/>
            <person name="Robert C."/>
            <person name="Cruaud C."/>
            <person name="Bruels T."/>
            <person name="Jaillon O."/>
            <person name="Friedlander L."/>
            <person name="Samson G."/>
            <person name="Brottier P."/>
            <person name="Cure S."/>
            <person name="Segurens B."/>
            <person name="Aniere F."/>
            <person name="Samain S."/>
            <person name="Crespeau H."/>
            <person name="Abbasi N."/>
            <person name="Aiach N."/>
            <person name="Boscus D."/>
            <person name="Dickhoff R."/>
            <person name="Dors M."/>
            <person name="Dubois I."/>
            <person name="Friedman C."/>
            <person name="Gouyvenoux M."/>
            <person name="James R."/>
            <person name="Madan A."/>
            <person name="Mairey-Estrada B."/>
            <person name="Mangenot S."/>
            <person name="Martins N."/>
            <person name="Menard M."/>
            <person name="Oztas S."/>
            <person name="Ratcliffe A."/>
            <person name="Shaffer T."/>
            <person name="Trask B."/>
            <person name="Vacherie B."/>
            <person name="Bellemere C."/>
            <person name="Belser C."/>
            <person name="Besnard-Gonnet M."/>
            <person name="Bartol-Mavel D."/>
            <person name="Boutard M."/>
            <person name="Briez-Silla S."/>
            <person name="Combette S."/>
            <person name="Dufosse-Laurent V."/>
            <person name="Ferron C."/>
            <person name="Lechaplais C."/>
            <person name="Louesse C."/>
            <person name="Muselet D."/>
            <person name="Magdelenat G."/>
            <person name="Pateau E."/>
            <person name="Petit E."/>
            <person name="Sirvain-Trukniewicz P."/>
            <person name="Trybou A."/>
            <person name="Vega-Czarny N."/>
            <person name="Bataille E."/>
            <person name="Bluet E."/>
            <person name="Bordelais I."/>
            <person name="Dubois M."/>
            <person name="Dumont C."/>
            <person name="Guerin T."/>
            <person name="Haffray S."/>
            <person name="Hammadi R."/>
            <person name="Muanga J."/>
            <person name="Pellouin V."/>
            <person name="Robert D."/>
            <person name="Wunderle E."/>
            <person name="Gauguet G."/>
            <person name="Roy A."/>
            <person name="Sainte-Marthe L."/>
            <person name="Verdier J."/>
            <person name="Verdier-Discala C."/>
            <person name="Hillier L.W."/>
            <person name="Fulton L."/>
            <person name="McPherson J."/>
            <person name="Matsuda F."/>
            <person name="Wilson R."/>
            <person name="Scarpelli C."/>
            <person name="Gyapay G."/>
            <person name="Wincker P."/>
            <person name="Saurin W."/>
            <person name="Quetier F."/>
            <person name="Waterston R."/>
            <person name="Hood L."/>
            <person name="Weissenbach J."/>
        </authorList>
    </citation>
    <scope>NUCLEOTIDE SEQUENCE [LARGE SCALE GENOMIC DNA]</scope>
</reference>
<reference key="4">
    <citation type="journal article" date="2004" name="Genome Res.">
        <title>The status, quality, and expansion of the NIH full-length cDNA project: the Mammalian Gene Collection (MGC).</title>
        <authorList>
            <consortium name="The MGC Project Team"/>
        </authorList>
    </citation>
    <scope>NUCLEOTIDE SEQUENCE [LARGE SCALE MRNA] (ISOFORM 2)</scope>
    <scope>VARIANT ARG-18</scope>
    <source>
        <tissue>Placenta</tissue>
    </source>
</reference>
<reference key="5">
    <citation type="journal article" date="2006" name="Biochimie">
        <title>The gene mutated in L-2-hydroxyglutaric aciduria encodes L-2-hydroxyglutarate dehydrogenase.</title>
        <authorList>
            <person name="Rzem R."/>
            <person name="Van Schaftingen E."/>
            <person name="Veiga-da-Cunha M."/>
        </authorList>
    </citation>
    <scope>CATALYTIC ACTIVITY</scope>
    <scope>BIOPHYSICOCHEMICAL PROPERTIES</scope>
    <scope>SUBCELLULAR LOCATION</scope>
    <scope>COFACTOR</scope>
</reference>
<reference key="6">
    <citation type="journal article" date="2009" name="Science">
        <title>Lysine acetylation targets protein complexes and co-regulates major cellular functions.</title>
        <authorList>
            <person name="Choudhary C."/>
            <person name="Kumar C."/>
            <person name="Gnad F."/>
            <person name="Nielsen M.L."/>
            <person name="Rehman M."/>
            <person name="Walther T.C."/>
            <person name="Olsen J.V."/>
            <person name="Mann M."/>
        </authorList>
    </citation>
    <scope>ACETYLATION [LARGE SCALE ANALYSIS] AT LYS-155</scope>
    <scope>IDENTIFICATION BY MASS SPECTROMETRY [LARGE SCALE ANALYSIS]</scope>
</reference>
<reference key="7">
    <citation type="journal article" date="2011" name="BMC Syst. Biol.">
        <title>Initial characterization of the human central proteome.</title>
        <authorList>
            <person name="Burkard T.R."/>
            <person name="Planyavsky M."/>
            <person name="Kaupe I."/>
            <person name="Breitwieser F.P."/>
            <person name="Buerckstuemmer T."/>
            <person name="Bennett K.L."/>
            <person name="Superti-Furga G."/>
            <person name="Colinge J."/>
        </authorList>
    </citation>
    <scope>IDENTIFICATION BY MASS SPECTROMETRY [LARGE SCALE ANALYSIS]</scope>
</reference>
<reference key="8">
    <citation type="journal article" date="2014" name="J. Proteomics">
        <title>An enzyme assisted RP-RPLC approach for in-depth analysis of human liver phosphoproteome.</title>
        <authorList>
            <person name="Bian Y."/>
            <person name="Song C."/>
            <person name="Cheng K."/>
            <person name="Dong M."/>
            <person name="Wang F."/>
            <person name="Huang J."/>
            <person name="Sun D."/>
            <person name="Wang L."/>
            <person name="Ye M."/>
            <person name="Zou H."/>
        </authorList>
    </citation>
    <scope>IDENTIFICATION BY MASS SPECTROMETRY [LARGE SCALE ANALYSIS]</scope>
    <source>
        <tissue>Liver</tissue>
    </source>
</reference>
<reference key="9">
    <citation type="journal article" date="2015" name="Proteomics">
        <title>N-terminome analysis of the human mitochondrial proteome.</title>
        <authorList>
            <person name="Vaca Jacome A.S."/>
            <person name="Rabilloud T."/>
            <person name="Schaeffer-Reiss C."/>
            <person name="Rompais M."/>
            <person name="Ayoub D."/>
            <person name="Lane L."/>
            <person name="Bairoch A."/>
            <person name="Van Dorsselaer A."/>
            <person name="Carapito C."/>
        </authorList>
    </citation>
    <scope>IDENTIFICATION BY MASS SPECTROMETRY [LARGE SCALE ANALYSIS]</scope>
</reference>
<reference key="10">
    <citation type="journal article" date="2004" name="Hum. Mol. Genet.">
        <title>L-2-hydroxyglutaric aciduria: identification of a mutant gene C14orf160, localized on chromosome 14q22.1.</title>
        <authorList>
            <person name="Topcu M."/>
            <person name="Jobard F."/>
            <person name="Halliez S."/>
            <person name="Coskun T."/>
            <person name="Yalcinkayal C."/>
            <person name="Gerceker F.O."/>
            <person name="Wanders R.J.A."/>
            <person name="Prud'homme J.-F."/>
            <person name="Lathrop M."/>
            <person name="Ozguc M."/>
            <person name="Fischer J."/>
        </authorList>
    </citation>
    <scope>VARIANTS L2HGA ASP-55; TYR-98 AND LEU-302</scope>
    <scope>TISSUE SPECIFICITY</scope>
</reference>
<reference key="11">
    <citation type="journal article" date="2005" name="Hum. Mutat.">
        <title>Novel L2HGDH mutations in 21 patients with L-2-hydroxyglutaric aciduria of Portuguese origin.</title>
        <authorList>
            <person name="Vilarinho L."/>
            <person name="Cardoso M.L."/>
            <person name="Gaspar P."/>
            <person name="Barbot C."/>
            <person name="Azevedo L."/>
            <person name="Diogo L."/>
            <person name="Santos M."/>
            <person name="Carrilho I."/>
            <person name="Fineza I."/>
            <person name="Kok F."/>
            <person name="Chorao R."/>
            <person name="Alegria P."/>
            <person name="Martins E."/>
            <person name="Teixeira J."/>
            <person name="Cabral-Fernandes H."/>
            <person name="Verhoeven N.M."/>
            <person name="Salomons G.S."/>
            <person name="Santorelli F.M."/>
            <person name="Cabral P."/>
            <person name="Amorim A."/>
            <person name="Jakobs C."/>
        </authorList>
    </citation>
    <scope>VARIANTS L2HGA ARG-57; ARG-98; LEU-302 AND PRO-434</scope>
    <scope>VARIANTS ARG-18 AND PHE-178</scope>
</reference>